<organism>
    <name type="scientific">Yersinia pseudotuberculosis serotype O:3 (strain YPIII)</name>
    <dbReference type="NCBI Taxonomy" id="502800"/>
    <lineage>
        <taxon>Bacteria</taxon>
        <taxon>Pseudomonadati</taxon>
        <taxon>Pseudomonadota</taxon>
        <taxon>Gammaproteobacteria</taxon>
        <taxon>Enterobacterales</taxon>
        <taxon>Yersiniaceae</taxon>
        <taxon>Yersinia</taxon>
    </lineage>
</organism>
<comment type="function">
    <text evidence="1">This protein is located at the 30S-50S ribosomal subunit interface and may play a role in the structure and function of the aminoacyl-tRNA binding site.</text>
</comment>
<comment type="similarity">
    <text evidence="1">Belongs to the bacterial ribosomal protein bL19 family.</text>
</comment>
<gene>
    <name evidence="1" type="primary">rplS</name>
    <name type="ordered locus">YPK_3361</name>
</gene>
<protein>
    <recommendedName>
        <fullName evidence="1">Large ribosomal subunit protein bL19</fullName>
    </recommendedName>
    <alternativeName>
        <fullName evidence="2">50S ribosomal protein L19</fullName>
    </alternativeName>
</protein>
<dbReference type="EMBL" id="CP000950">
    <property type="protein sequence ID" value="ACA69628.1"/>
    <property type="molecule type" value="Genomic_DNA"/>
</dbReference>
<dbReference type="RefSeq" id="WP_002209461.1">
    <property type="nucleotide sequence ID" value="NZ_CP009792.1"/>
</dbReference>
<dbReference type="SMR" id="B1JJ88"/>
<dbReference type="GeneID" id="96664344"/>
<dbReference type="KEGG" id="ypy:YPK_3361"/>
<dbReference type="PATRIC" id="fig|502800.11.peg.4096"/>
<dbReference type="GO" id="GO:0022625">
    <property type="term" value="C:cytosolic large ribosomal subunit"/>
    <property type="evidence" value="ECO:0007669"/>
    <property type="project" value="TreeGrafter"/>
</dbReference>
<dbReference type="GO" id="GO:0003735">
    <property type="term" value="F:structural constituent of ribosome"/>
    <property type="evidence" value="ECO:0007669"/>
    <property type="project" value="InterPro"/>
</dbReference>
<dbReference type="GO" id="GO:0006412">
    <property type="term" value="P:translation"/>
    <property type="evidence" value="ECO:0007669"/>
    <property type="project" value="UniProtKB-UniRule"/>
</dbReference>
<dbReference type="FunFam" id="2.30.30.790:FF:000001">
    <property type="entry name" value="50S ribosomal protein L19"/>
    <property type="match status" value="1"/>
</dbReference>
<dbReference type="Gene3D" id="2.30.30.790">
    <property type="match status" value="1"/>
</dbReference>
<dbReference type="HAMAP" id="MF_00402">
    <property type="entry name" value="Ribosomal_bL19"/>
    <property type="match status" value="1"/>
</dbReference>
<dbReference type="InterPro" id="IPR001857">
    <property type="entry name" value="Ribosomal_bL19"/>
</dbReference>
<dbReference type="InterPro" id="IPR018257">
    <property type="entry name" value="Ribosomal_bL19_CS"/>
</dbReference>
<dbReference type="InterPro" id="IPR038657">
    <property type="entry name" value="Ribosomal_bL19_sf"/>
</dbReference>
<dbReference type="InterPro" id="IPR008991">
    <property type="entry name" value="Translation_prot_SH3-like_sf"/>
</dbReference>
<dbReference type="NCBIfam" id="TIGR01024">
    <property type="entry name" value="rplS_bact"/>
    <property type="match status" value="1"/>
</dbReference>
<dbReference type="PANTHER" id="PTHR15680:SF9">
    <property type="entry name" value="LARGE RIBOSOMAL SUBUNIT PROTEIN BL19M"/>
    <property type="match status" value="1"/>
</dbReference>
<dbReference type="PANTHER" id="PTHR15680">
    <property type="entry name" value="RIBOSOMAL PROTEIN L19"/>
    <property type="match status" value="1"/>
</dbReference>
<dbReference type="Pfam" id="PF01245">
    <property type="entry name" value="Ribosomal_L19"/>
    <property type="match status" value="1"/>
</dbReference>
<dbReference type="PIRSF" id="PIRSF002191">
    <property type="entry name" value="Ribosomal_L19"/>
    <property type="match status" value="1"/>
</dbReference>
<dbReference type="PRINTS" id="PR00061">
    <property type="entry name" value="RIBOSOMALL19"/>
</dbReference>
<dbReference type="SUPFAM" id="SSF50104">
    <property type="entry name" value="Translation proteins SH3-like domain"/>
    <property type="match status" value="1"/>
</dbReference>
<dbReference type="PROSITE" id="PS01015">
    <property type="entry name" value="RIBOSOMAL_L19"/>
    <property type="match status" value="1"/>
</dbReference>
<name>RL19_YERPY</name>
<accession>B1JJ88</accession>
<sequence length="115" mass="13090">MSNIIKQIEQEQMKQDVPAFRPGDSVEVKVWVVEGSKKRLQAFEGVVIAIRNRGLHSAFTVRKISNGEGVERVFQTHSPVIDSITVKRRGAVRQAKLYYLRERTGKSARIKERLG</sequence>
<proteinExistence type="inferred from homology"/>
<feature type="chain" id="PRO_1000193927" description="Large ribosomal subunit protein bL19">
    <location>
        <begin position="1"/>
        <end position="115"/>
    </location>
</feature>
<reference key="1">
    <citation type="submission" date="2008-02" db="EMBL/GenBank/DDBJ databases">
        <title>Complete sequence of Yersinia pseudotuberculosis YPIII.</title>
        <authorList>
            <consortium name="US DOE Joint Genome Institute"/>
            <person name="Copeland A."/>
            <person name="Lucas S."/>
            <person name="Lapidus A."/>
            <person name="Glavina del Rio T."/>
            <person name="Dalin E."/>
            <person name="Tice H."/>
            <person name="Bruce D."/>
            <person name="Goodwin L."/>
            <person name="Pitluck S."/>
            <person name="Munk A.C."/>
            <person name="Brettin T."/>
            <person name="Detter J.C."/>
            <person name="Han C."/>
            <person name="Tapia R."/>
            <person name="Schmutz J."/>
            <person name="Larimer F."/>
            <person name="Land M."/>
            <person name="Hauser L."/>
            <person name="Challacombe J.F."/>
            <person name="Green L."/>
            <person name="Lindler L.E."/>
            <person name="Nikolich M.P."/>
            <person name="Richardson P."/>
        </authorList>
    </citation>
    <scope>NUCLEOTIDE SEQUENCE [LARGE SCALE GENOMIC DNA]</scope>
    <source>
        <strain>YPIII</strain>
    </source>
</reference>
<keyword id="KW-0687">Ribonucleoprotein</keyword>
<keyword id="KW-0689">Ribosomal protein</keyword>
<evidence type="ECO:0000255" key="1">
    <source>
        <dbReference type="HAMAP-Rule" id="MF_00402"/>
    </source>
</evidence>
<evidence type="ECO:0000305" key="2"/>